<comment type="function">
    <text evidence="1">Catalyzes the formation of the alpha-1,6-glucosidic linkages in glycogen by scission of a 1,4-alpha-linked oligosaccharide from growing alpha-1,4-glucan chains and the subsequent attachment of the oligosaccharide to the alpha-1,6 position.</text>
</comment>
<comment type="catalytic activity">
    <reaction evidence="1">
        <text>Transfers a segment of a (1-&gt;4)-alpha-D-glucan chain to a primary hydroxy group in a similar glucan chain.</text>
        <dbReference type="EC" id="2.4.1.18"/>
    </reaction>
</comment>
<comment type="pathway">
    <text evidence="1">Glycan biosynthesis; glycogen biosynthesis.</text>
</comment>
<comment type="subunit">
    <text evidence="1">Monomer.</text>
</comment>
<comment type="similarity">
    <text evidence="1">Belongs to the glycosyl hydrolase 13 family. GlgB subfamily.</text>
</comment>
<sequence>MKNKNSEQNTHYTIGEQDIHYFHEGKHIYAYEFMGAHKACEEGIEGIRFTTWAPNAKSICVIGDFNYWQVEDKNYMEPITDAGLWSVFIPNAKNGDKYKFVVTNKDTSHYVYKSDPYAFFSELRPNTASIITTETQYTWSDDKWLEKRAKTNYYDNPMNVYELHLASWKTKNGKFLTYDELSETLPQYIKEMGYTHVEFMPLHEHPLDASWGYQPTGFYSVNSRHGDIIGLKRLVDKLHNNDIGVILDWVPGHFCKDQHGLIYFDGSPCYEYQEPTKAINKGWETHNFDLGRNEVKCFLISNAMYWINEFHIDGLRVDAVSNILYLNYDREDGQWIPNIYGGHENLEGIAFLKELNGVLKHTCKGVITIAEESSSWPDISTPVEKGGLGFDFKWNMGWMNDTLRYISLDPVYRKYHHNLITFSMVYHYSEKFILSISHDEVVHGKKSLINKMWGDLWNKYAGLRLYMSYMIGHPGKKLIFMGSEFVQFVEWREYEQLQWQVVDQYESHKQTLHFFKKLNDFYHNETALWQCDYDHHGFRWIDANNSQQSILSFIRSSKDNKQKLIFICNFTPVTYYDYHLGVPDAGSYKEVFNSDNLEFGGSGQVMATEIFSSPQSSHGFEQRITIKIPPMATLVLKLIK</sequence>
<proteinExistence type="inferred from homology"/>
<reference key="1">
    <citation type="journal article" date="2009" name="PLoS ONE">
        <title>Complete genome sequence of Francisella tularensis subspecies holarctica FTNF002-00.</title>
        <authorList>
            <person name="Barabote R.D."/>
            <person name="Xie G."/>
            <person name="Brettin T.S."/>
            <person name="Hinrichs S.H."/>
            <person name="Fey P.D."/>
            <person name="Jay J.J."/>
            <person name="Engle J.L."/>
            <person name="Godbole S.D."/>
            <person name="Noronha J.M."/>
            <person name="Scheuermann R.H."/>
            <person name="Zhou L.W."/>
            <person name="Lion C."/>
            <person name="Dempsey M.P."/>
        </authorList>
    </citation>
    <scope>NUCLEOTIDE SEQUENCE [LARGE SCALE GENOMIC DNA]</scope>
    <source>
        <strain>FTNF002-00 / FTA</strain>
    </source>
</reference>
<evidence type="ECO:0000255" key="1">
    <source>
        <dbReference type="HAMAP-Rule" id="MF_00685"/>
    </source>
</evidence>
<keyword id="KW-0119">Carbohydrate metabolism</keyword>
<keyword id="KW-0320">Glycogen biosynthesis</keyword>
<keyword id="KW-0321">Glycogen metabolism</keyword>
<keyword id="KW-0328">Glycosyltransferase</keyword>
<keyword id="KW-0808">Transferase</keyword>
<protein>
    <recommendedName>
        <fullName evidence="1">1,4-alpha-glucan branching enzyme GlgB</fullName>
        <ecNumber evidence="1">2.4.1.18</ecNumber>
    </recommendedName>
    <alternativeName>
        <fullName evidence="1">1,4-alpha-D-glucan:1,4-alpha-D-glucan 6-glucosyl-transferase</fullName>
    </alternativeName>
    <alternativeName>
        <fullName evidence="1">Alpha-(1-&gt;4)-glucan branching enzyme</fullName>
    </alternativeName>
    <alternativeName>
        <fullName evidence="1">Glycogen branching enzyme</fullName>
        <shortName evidence="1">BE</shortName>
    </alternativeName>
</protein>
<dbReference type="EC" id="2.4.1.18" evidence="1"/>
<dbReference type="EMBL" id="CP000803">
    <property type="protein sequence ID" value="ABU60985.1"/>
    <property type="molecule type" value="Genomic_DNA"/>
</dbReference>
<dbReference type="RefSeq" id="WP_003018016.1">
    <property type="nucleotide sequence ID" value="NC_009749.1"/>
</dbReference>
<dbReference type="SMR" id="A7NAI2"/>
<dbReference type="CAZy" id="CBM48">
    <property type="family name" value="Carbohydrate-Binding Module Family 48"/>
</dbReference>
<dbReference type="CAZy" id="GH13">
    <property type="family name" value="Glycoside Hydrolase Family 13"/>
</dbReference>
<dbReference type="KEGG" id="fta:FTA_0509"/>
<dbReference type="HOGENOM" id="CLU_004245_3_2_6"/>
<dbReference type="UniPathway" id="UPA00164"/>
<dbReference type="GO" id="GO:0005829">
    <property type="term" value="C:cytosol"/>
    <property type="evidence" value="ECO:0007669"/>
    <property type="project" value="TreeGrafter"/>
</dbReference>
<dbReference type="GO" id="GO:0003844">
    <property type="term" value="F:1,4-alpha-glucan branching enzyme activity"/>
    <property type="evidence" value="ECO:0007669"/>
    <property type="project" value="UniProtKB-UniRule"/>
</dbReference>
<dbReference type="GO" id="GO:0043169">
    <property type="term" value="F:cation binding"/>
    <property type="evidence" value="ECO:0007669"/>
    <property type="project" value="InterPro"/>
</dbReference>
<dbReference type="GO" id="GO:0004553">
    <property type="term" value="F:hydrolase activity, hydrolyzing O-glycosyl compounds"/>
    <property type="evidence" value="ECO:0007669"/>
    <property type="project" value="InterPro"/>
</dbReference>
<dbReference type="GO" id="GO:0005978">
    <property type="term" value="P:glycogen biosynthetic process"/>
    <property type="evidence" value="ECO:0007669"/>
    <property type="project" value="UniProtKB-UniRule"/>
</dbReference>
<dbReference type="CDD" id="cd11322">
    <property type="entry name" value="AmyAc_Glg_BE"/>
    <property type="match status" value="1"/>
</dbReference>
<dbReference type="CDD" id="cd02855">
    <property type="entry name" value="E_set_GBE_prok_N"/>
    <property type="match status" value="1"/>
</dbReference>
<dbReference type="FunFam" id="2.60.40.1180:FF:000002">
    <property type="entry name" value="1,4-alpha-glucan branching enzyme GlgB"/>
    <property type="match status" value="1"/>
</dbReference>
<dbReference type="FunFam" id="3.20.20.80:FF:000003">
    <property type="entry name" value="1,4-alpha-glucan branching enzyme GlgB"/>
    <property type="match status" value="1"/>
</dbReference>
<dbReference type="Gene3D" id="3.20.20.80">
    <property type="entry name" value="Glycosidases"/>
    <property type="match status" value="1"/>
</dbReference>
<dbReference type="Gene3D" id="2.60.40.1180">
    <property type="entry name" value="Golgi alpha-mannosidase II"/>
    <property type="match status" value="1"/>
</dbReference>
<dbReference type="Gene3D" id="2.60.40.10">
    <property type="entry name" value="Immunoglobulins"/>
    <property type="match status" value="1"/>
</dbReference>
<dbReference type="HAMAP" id="MF_00685">
    <property type="entry name" value="GlgB"/>
    <property type="match status" value="1"/>
</dbReference>
<dbReference type="InterPro" id="IPR006048">
    <property type="entry name" value="A-amylase/branching_C"/>
</dbReference>
<dbReference type="InterPro" id="IPR037439">
    <property type="entry name" value="Branching_enzy"/>
</dbReference>
<dbReference type="InterPro" id="IPR006407">
    <property type="entry name" value="GlgB"/>
</dbReference>
<dbReference type="InterPro" id="IPR044143">
    <property type="entry name" value="GlgB_N_E_set_prok"/>
</dbReference>
<dbReference type="InterPro" id="IPR006047">
    <property type="entry name" value="Glyco_hydro_13_cat_dom"/>
</dbReference>
<dbReference type="InterPro" id="IPR004193">
    <property type="entry name" value="Glyco_hydro_13_N"/>
</dbReference>
<dbReference type="InterPro" id="IPR013780">
    <property type="entry name" value="Glyco_hydro_b"/>
</dbReference>
<dbReference type="InterPro" id="IPR017853">
    <property type="entry name" value="Glycoside_hydrolase_SF"/>
</dbReference>
<dbReference type="InterPro" id="IPR013783">
    <property type="entry name" value="Ig-like_fold"/>
</dbReference>
<dbReference type="InterPro" id="IPR014756">
    <property type="entry name" value="Ig_E-set"/>
</dbReference>
<dbReference type="NCBIfam" id="TIGR01515">
    <property type="entry name" value="branching_enzym"/>
    <property type="match status" value="1"/>
</dbReference>
<dbReference type="NCBIfam" id="NF003811">
    <property type="entry name" value="PRK05402.1"/>
    <property type="match status" value="1"/>
</dbReference>
<dbReference type="NCBIfam" id="NF008967">
    <property type="entry name" value="PRK12313.1"/>
    <property type="match status" value="1"/>
</dbReference>
<dbReference type="PANTHER" id="PTHR43651">
    <property type="entry name" value="1,4-ALPHA-GLUCAN-BRANCHING ENZYME"/>
    <property type="match status" value="1"/>
</dbReference>
<dbReference type="PANTHER" id="PTHR43651:SF3">
    <property type="entry name" value="1,4-ALPHA-GLUCAN-BRANCHING ENZYME"/>
    <property type="match status" value="1"/>
</dbReference>
<dbReference type="Pfam" id="PF00128">
    <property type="entry name" value="Alpha-amylase"/>
    <property type="match status" value="2"/>
</dbReference>
<dbReference type="Pfam" id="PF02806">
    <property type="entry name" value="Alpha-amylase_C"/>
    <property type="match status" value="1"/>
</dbReference>
<dbReference type="Pfam" id="PF02922">
    <property type="entry name" value="CBM_48"/>
    <property type="match status" value="1"/>
</dbReference>
<dbReference type="PIRSF" id="PIRSF000463">
    <property type="entry name" value="GlgB"/>
    <property type="match status" value="1"/>
</dbReference>
<dbReference type="SMART" id="SM00642">
    <property type="entry name" value="Aamy"/>
    <property type="match status" value="1"/>
</dbReference>
<dbReference type="SUPFAM" id="SSF51445">
    <property type="entry name" value="(Trans)glycosidases"/>
    <property type="match status" value="1"/>
</dbReference>
<dbReference type="SUPFAM" id="SSF81296">
    <property type="entry name" value="E set domains"/>
    <property type="match status" value="1"/>
</dbReference>
<dbReference type="SUPFAM" id="SSF51011">
    <property type="entry name" value="Glycosyl hydrolase domain"/>
    <property type="match status" value="1"/>
</dbReference>
<gene>
    <name evidence="1" type="primary">glgB</name>
    <name type="ordered locus">FTA_0509</name>
</gene>
<feature type="chain" id="PRO_1000044977" description="1,4-alpha-glucan branching enzyme GlgB">
    <location>
        <begin position="1"/>
        <end position="640"/>
    </location>
</feature>
<feature type="active site" description="Nucleophile" evidence="1">
    <location>
        <position position="318"/>
    </location>
</feature>
<feature type="active site" description="Proton donor" evidence="1">
    <location>
        <position position="371"/>
    </location>
</feature>
<accession>A7NAI2</accession>
<name>GLGB_FRATF</name>
<organism>
    <name type="scientific">Francisella tularensis subsp. holarctica (strain FTNF002-00 / FTA)</name>
    <dbReference type="NCBI Taxonomy" id="458234"/>
    <lineage>
        <taxon>Bacteria</taxon>
        <taxon>Pseudomonadati</taxon>
        <taxon>Pseudomonadota</taxon>
        <taxon>Gammaproteobacteria</taxon>
        <taxon>Thiotrichales</taxon>
        <taxon>Francisellaceae</taxon>
        <taxon>Francisella</taxon>
    </lineage>
</organism>